<name>PYRB_STRPS</name>
<feature type="chain" id="PRO_1000088809" description="Aspartate carbamoyltransferase catalytic subunit">
    <location>
        <begin position="1"/>
        <end position="307"/>
    </location>
</feature>
<feature type="binding site" evidence="1">
    <location>
        <position position="56"/>
    </location>
    <ligand>
        <name>carbamoyl phosphate</name>
        <dbReference type="ChEBI" id="CHEBI:58228"/>
    </ligand>
</feature>
<feature type="binding site" evidence="1">
    <location>
        <position position="57"/>
    </location>
    <ligand>
        <name>carbamoyl phosphate</name>
        <dbReference type="ChEBI" id="CHEBI:58228"/>
    </ligand>
</feature>
<feature type="binding site" evidence="1">
    <location>
        <position position="84"/>
    </location>
    <ligand>
        <name>L-aspartate</name>
        <dbReference type="ChEBI" id="CHEBI:29991"/>
    </ligand>
</feature>
<feature type="binding site" evidence="1">
    <location>
        <position position="106"/>
    </location>
    <ligand>
        <name>carbamoyl phosphate</name>
        <dbReference type="ChEBI" id="CHEBI:58228"/>
    </ligand>
</feature>
<feature type="binding site" evidence="1">
    <location>
        <position position="136"/>
    </location>
    <ligand>
        <name>carbamoyl phosphate</name>
        <dbReference type="ChEBI" id="CHEBI:58228"/>
    </ligand>
</feature>
<feature type="binding site" evidence="1">
    <location>
        <position position="139"/>
    </location>
    <ligand>
        <name>carbamoyl phosphate</name>
        <dbReference type="ChEBI" id="CHEBI:58228"/>
    </ligand>
</feature>
<feature type="binding site" evidence="1">
    <location>
        <position position="169"/>
    </location>
    <ligand>
        <name>L-aspartate</name>
        <dbReference type="ChEBI" id="CHEBI:29991"/>
    </ligand>
</feature>
<feature type="binding site" evidence="1">
    <location>
        <position position="221"/>
    </location>
    <ligand>
        <name>L-aspartate</name>
        <dbReference type="ChEBI" id="CHEBI:29991"/>
    </ligand>
</feature>
<feature type="binding site" evidence="1">
    <location>
        <position position="262"/>
    </location>
    <ligand>
        <name>carbamoyl phosphate</name>
        <dbReference type="ChEBI" id="CHEBI:58228"/>
    </ligand>
</feature>
<feature type="binding site" evidence="1">
    <location>
        <position position="263"/>
    </location>
    <ligand>
        <name>carbamoyl phosphate</name>
        <dbReference type="ChEBI" id="CHEBI:58228"/>
    </ligand>
</feature>
<accession>B2IQ69</accession>
<evidence type="ECO:0000255" key="1">
    <source>
        <dbReference type="HAMAP-Rule" id="MF_00001"/>
    </source>
</evidence>
<comment type="function">
    <text evidence="1">Catalyzes the condensation of carbamoyl phosphate and aspartate to form carbamoyl aspartate and inorganic phosphate, the committed step in the de novo pyrimidine nucleotide biosynthesis pathway.</text>
</comment>
<comment type="catalytic activity">
    <reaction evidence="1">
        <text>carbamoyl phosphate + L-aspartate = N-carbamoyl-L-aspartate + phosphate + H(+)</text>
        <dbReference type="Rhea" id="RHEA:20013"/>
        <dbReference type="ChEBI" id="CHEBI:15378"/>
        <dbReference type="ChEBI" id="CHEBI:29991"/>
        <dbReference type="ChEBI" id="CHEBI:32814"/>
        <dbReference type="ChEBI" id="CHEBI:43474"/>
        <dbReference type="ChEBI" id="CHEBI:58228"/>
        <dbReference type="EC" id="2.1.3.2"/>
    </reaction>
</comment>
<comment type="pathway">
    <text evidence="1">Pyrimidine metabolism; UMP biosynthesis via de novo pathway; (S)-dihydroorotate from bicarbonate: step 2/3.</text>
</comment>
<comment type="subunit">
    <text evidence="1">Heterododecamer (2C3:3R2) of six catalytic PyrB chains organized as two trimers (C3), and six regulatory PyrI chains organized as three dimers (R2).</text>
</comment>
<comment type="similarity">
    <text evidence="1">Belongs to the aspartate/ornithine carbamoyltransferase superfamily. ATCase family.</text>
</comment>
<reference key="1">
    <citation type="journal article" date="2009" name="BMC Genomics">
        <title>Genome evolution driven by host adaptations results in a more virulent and antimicrobial-resistant Streptococcus pneumoniae serotype 14.</title>
        <authorList>
            <person name="Ding F."/>
            <person name="Tang P."/>
            <person name="Hsu M.-H."/>
            <person name="Cui P."/>
            <person name="Hu S."/>
            <person name="Yu J."/>
            <person name="Chiu C.-H."/>
        </authorList>
    </citation>
    <scope>NUCLEOTIDE SEQUENCE [LARGE SCALE GENOMIC DNA]</scope>
    <source>
        <strain>CGSP14</strain>
    </source>
</reference>
<sequence length="307" mass="34706">MSENQQALNHVVSMEDLTVDQVMKLIKRGIEFKNGAQLPYEDHPIVSNLFFEDSTRTHKSFEVAEIKLGLERLDFDVKTSSVNKGETLYDTILTLSALGVDVCVIRHPEVDYYRELIASPTITTSIINGGDGSGQHPSQSLLDLMTIYEEFGHFEGLKVAIAGDLDHSRVAKSNMQILKRLGSELFFAGPEEWRSQEFADYGQFVTIDEIIDQVDVMMFLRVQHERHDSGAVFSKEDYHAQHGLTQERYDRLKETAILMHPAPINRDVEIADHLVEAPKSRIVQQMTNGVFVRMAILESVLASRNAN</sequence>
<protein>
    <recommendedName>
        <fullName evidence="1">Aspartate carbamoyltransferase catalytic subunit</fullName>
        <ecNumber evidence="1">2.1.3.2</ecNumber>
    </recommendedName>
    <alternativeName>
        <fullName evidence="1">Aspartate transcarbamylase</fullName>
        <shortName evidence="1">ATCase</shortName>
    </alternativeName>
</protein>
<gene>
    <name evidence="1" type="primary">pyrB</name>
    <name type="ordered locus">SPCG_1241</name>
</gene>
<proteinExistence type="inferred from homology"/>
<organism>
    <name type="scientific">Streptococcus pneumoniae (strain CGSP14)</name>
    <dbReference type="NCBI Taxonomy" id="516950"/>
    <lineage>
        <taxon>Bacteria</taxon>
        <taxon>Bacillati</taxon>
        <taxon>Bacillota</taxon>
        <taxon>Bacilli</taxon>
        <taxon>Lactobacillales</taxon>
        <taxon>Streptococcaceae</taxon>
        <taxon>Streptococcus</taxon>
    </lineage>
</organism>
<dbReference type="EC" id="2.1.3.2" evidence="1"/>
<dbReference type="EMBL" id="CP001033">
    <property type="protein sequence ID" value="ACB90493.1"/>
    <property type="molecule type" value="Genomic_DNA"/>
</dbReference>
<dbReference type="RefSeq" id="WP_001293845.1">
    <property type="nucleotide sequence ID" value="NC_010582.1"/>
</dbReference>
<dbReference type="SMR" id="B2IQ69"/>
<dbReference type="KEGG" id="spw:SPCG_1241"/>
<dbReference type="HOGENOM" id="CLU_043846_2_1_9"/>
<dbReference type="UniPathway" id="UPA00070">
    <property type="reaction ID" value="UER00116"/>
</dbReference>
<dbReference type="GO" id="GO:0005829">
    <property type="term" value="C:cytosol"/>
    <property type="evidence" value="ECO:0007669"/>
    <property type="project" value="TreeGrafter"/>
</dbReference>
<dbReference type="GO" id="GO:0016597">
    <property type="term" value="F:amino acid binding"/>
    <property type="evidence" value="ECO:0007669"/>
    <property type="project" value="InterPro"/>
</dbReference>
<dbReference type="GO" id="GO:0004070">
    <property type="term" value="F:aspartate carbamoyltransferase activity"/>
    <property type="evidence" value="ECO:0007669"/>
    <property type="project" value="UniProtKB-UniRule"/>
</dbReference>
<dbReference type="GO" id="GO:0006207">
    <property type="term" value="P:'de novo' pyrimidine nucleobase biosynthetic process"/>
    <property type="evidence" value="ECO:0007669"/>
    <property type="project" value="InterPro"/>
</dbReference>
<dbReference type="GO" id="GO:0044205">
    <property type="term" value="P:'de novo' UMP biosynthetic process"/>
    <property type="evidence" value="ECO:0007669"/>
    <property type="project" value="UniProtKB-UniRule"/>
</dbReference>
<dbReference type="GO" id="GO:0006520">
    <property type="term" value="P:amino acid metabolic process"/>
    <property type="evidence" value="ECO:0007669"/>
    <property type="project" value="InterPro"/>
</dbReference>
<dbReference type="FunFam" id="3.40.50.1370:FF:000011">
    <property type="entry name" value="Aspartate carbamoyltransferase"/>
    <property type="match status" value="1"/>
</dbReference>
<dbReference type="Gene3D" id="3.40.50.1370">
    <property type="entry name" value="Aspartate/ornithine carbamoyltransferase"/>
    <property type="match status" value="2"/>
</dbReference>
<dbReference type="HAMAP" id="MF_00001">
    <property type="entry name" value="Asp_carb_tr"/>
    <property type="match status" value="1"/>
</dbReference>
<dbReference type="InterPro" id="IPR006132">
    <property type="entry name" value="Asp/Orn_carbamoyltranf_P-bd"/>
</dbReference>
<dbReference type="InterPro" id="IPR006130">
    <property type="entry name" value="Asp/Orn_carbamoylTrfase"/>
</dbReference>
<dbReference type="InterPro" id="IPR036901">
    <property type="entry name" value="Asp/Orn_carbamoylTrfase_sf"/>
</dbReference>
<dbReference type="InterPro" id="IPR002082">
    <property type="entry name" value="Asp_carbamoyltransf"/>
</dbReference>
<dbReference type="InterPro" id="IPR006131">
    <property type="entry name" value="Asp_carbamoyltransf_Asp/Orn-bd"/>
</dbReference>
<dbReference type="NCBIfam" id="TIGR00670">
    <property type="entry name" value="asp_carb_tr"/>
    <property type="match status" value="1"/>
</dbReference>
<dbReference type="NCBIfam" id="NF002032">
    <property type="entry name" value="PRK00856.1"/>
    <property type="match status" value="1"/>
</dbReference>
<dbReference type="PANTHER" id="PTHR45753:SF6">
    <property type="entry name" value="ASPARTATE CARBAMOYLTRANSFERASE"/>
    <property type="match status" value="1"/>
</dbReference>
<dbReference type="PANTHER" id="PTHR45753">
    <property type="entry name" value="ORNITHINE CARBAMOYLTRANSFERASE, MITOCHONDRIAL"/>
    <property type="match status" value="1"/>
</dbReference>
<dbReference type="Pfam" id="PF00185">
    <property type="entry name" value="OTCace"/>
    <property type="match status" value="1"/>
</dbReference>
<dbReference type="Pfam" id="PF02729">
    <property type="entry name" value="OTCace_N"/>
    <property type="match status" value="1"/>
</dbReference>
<dbReference type="PRINTS" id="PR00100">
    <property type="entry name" value="AOTCASE"/>
</dbReference>
<dbReference type="PRINTS" id="PR00101">
    <property type="entry name" value="ATCASE"/>
</dbReference>
<dbReference type="SUPFAM" id="SSF53671">
    <property type="entry name" value="Aspartate/ornithine carbamoyltransferase"/>
    <property type="match status" value="1"/>
</dbReference>
<dbReference type="PROSITE" id="PS00097">
    <property type="entry name" value="CARBAMOYLTRANSFERASE"/>
    <property type="match status" value="1"/>
</dbReference>
<keyword id="KW-0665">Pyrimidine biosynthesis</keyword>
<keyword id="KW-0808">Transferase</keyword>